<feature type="chain" id="PRO_1000040373" description="6,7-dimethyl-8-ribityllumazine synthase">
    <location>
        <begin position="1"/>
        <end position="152"/>
    </location>
</feature>
<feature type="active site" description="Proton donor" evidence="1">
    <location>
        <position position="83"/>
    </location>
</feature>
<feature type="binding site" evidence="1">
    <location>
        <position position="18"/>
    </location>
    <ligand>
        <name>5-amino-6-(D-ribitylamino)uracil</name>
        <dbReference type="ChEBI" id="CHEBI:15934"/>
    </ligand>
</feature>
<feature type="binding site" evidence="1">
    <location>
        <begin position="49"/>
        <end position="51"/>
    </location>
    <ligand>
        <name>5-amino-6-(D-ribitylamino)uracil</name>
        <dbReference type="ChEBI" id="CHEBI:15934"/>
    </ligand>
</feature>
<feature type="binding site" evidence="1">
    <location>
        <begin position="75"/>
        <end position="77"/>
    </location>
    <ligand>
        <name>5-amino-6-(D-ribitylamino)uracil</name>
        <dbReference type="ChEBI" id="CHEBI:15934"/>
    </ligand>
</feature>
<feature type="binding site" evidence="1">
    <location>
        <begin position="80"/>
        <end position="81"/>
    </location>
    <ligand>
        <name>(2S)-2-hydroxy-3-oxobutyl phosphate</name>
        <dbReference type="ChEBI" id="CHEBI:58830"/>
    </ligand>
</feature>
<feature type="binding site" evidence="1">
    <location>
        <position position="108"/>
    </location>
    <ligand>
        <name>5-amino-6-(D-ribitylamino)uracil</name>
        <dbReference type="ChEBI" id="CHEBI:15934"/>
    </ligand>
</feature>
<feature type="binding site" evidence="1">
    <location>
        <position position="122"/>
    </location>
    <ligand>
        <name>(2S)-2-hydroxy-3-oxobutyl phosphate</name>
        <dbReference type="ChEBI" id="CHEBI:58830"/>
    </ligand>
</feature>
<gene>
    <name evidence="1" type="primary">ribH</name>
    <name type="ordered locus">BARBAKC583_0633</name>
</gene>
<accession>A1USI4</accession>
<comment type="function">
    <text evidence="1">Catalyzes the formation of 6,7-dimethyl-8-ribityllumazine by condensation of 5-amino-6-(D-ribitylamino)uracil with 3,4-dihydroxy-2-butanone 4-phosphate. This is the penultimate step in the biosynthesis of riboflavin.</text>
</comment>
<comment type="catalytic activity">
    <reaction evidence="1">
        <text>(2S)-2-hydroxy-3-oxobutyl phosphate + 5-amino-6-(D-ribitylamino)uracil = 6,7-dimethyl-8-(1-D-ribityl)lumazine + phosphate + 2 H2O + H(+)</text>
        <dbReference type="Rhea" id="RHEA:26152"/>
        <dbReference type="ChEBI" id="CHEBI:15377"/>
        <dbReference type="ChEBI" id="CHEBI:15378"/>
        <dbReference type="ChEBI" id="CHEBI:15934"/>
        <dbReference type="ChEBI" id="CHEBI:43474"/>
        <dbReference type="ChEBI" id="CHEBI:58201"/>
        <dbReference type="ChEBI" id="CHEBI:58830"/>
        <dbReference type="EC" id="2.5.1.78"/>
    </reaction>
</comment>
<comment type="pathway">
    <text evidence="1">Cofactor biosynthesis; riboflavin biosynthesis; riboflavin from 2-hydroxy-3-oxobutyl phosphate and 5-amino-6-(D-ribitylamino)uracil: step 1/2.</text>
</comment>
<comment type="similarity">
    <text evidence="1">Belongs to the DMRL synthase family.</text>
</comment>
<dbReference type="EC" id="2.5.1.78" evidence="1"/>
<dbReference type="EMBL" id="CP000524">
    <property type="protein sequence ID" value="ABM44740.1"/>
    <property type="molecule type" value="Genomic_DNA"/>
</dbReference>
<dbReference type="RefSeq" id="WP_005766842.1">
    <property type="nucleotide sequence ID" value="NC_008783.1"/>
</dbReference>
<dbReference type="SMR" id="A1USI4"/>
<dbReference type="STRING" id="360095.BARBAKC583_0633"/>
<dbReference type="GeneID" id="4684624"/>
<dbReference type="KEGG" id="bbk:BARBAKC583_0633"/>
<dbReference type="PATRIC" id="fig|360095.6.peg.617"/>
<dbReference type="eggNOG" id="COG0054">
    <property type="taxonomic scope" value="Bacteria"/>
</dbReference>
<dbReference type="HOGENOM" id="CLU_089358_1_2_5"/>
<dbReference type="OrthoDB" id="9809709at2"/>
<dbReference type="UniPathway" id="UPA00275">
    <property type="reaction ID" value="UER00404"/>
</dbReference>
<dbReference type="Proteomes" id="UP000000643">
    <property type="component" value="Chromosome"/>
</dbReference>
<dbReference type="GO" id="GO:0005829">
    <property type="term" value="C:cytosol"/>
    <property type="evidence" value="ECO:0007669"/>
    <property type="project" value="TreeGrafter"/>
</dbReference>
<dbReference type="GO" id="GO:0009349">
    <property type="term" value="C:riboflavin synthase complex"/>
    <property type="evidence" value="ECO:0007669"/>
    <property type="project" value="InterPro"/>
</dbReference>
<dbReference type="GO" id="GO:0000906">
    <property type="term" value="F:6,7-dimethyl-8-ribityllumazine synthase activity"/>
    <property type="evidence" value="ECO:0007669"/>
    <property type="project" value="UniProtKB-UniRule"/>
</dbReference>
<dbReference type="GO" id="GO:0009231">
    <property type="term" value="P:riboflavin biosynthetic process"/>
    <property type="evidence" value="ECO:0007669"/>
    <property type="project" value="UniProtKB-UniRule"/>
</dbReference>
<dbReference type="CDD" id="cd09209">
    <property type="entry name" value="Lumazine_synthase-I"/>
    <property type="match status" value="1"/>
</dbReference>
<dbReference type="Gene3D" id="3.40.50.960">
    <property type="entry name" value="Lumazine/riboflavin synthase"/>
    <property type="match status" value="1"/>
</dbReference>
<dbReference type="HAMAP" id="MF_00178">
    <property type="entry name" value="Lumazine_synth"/>
    <property type="match status" value="1"/>
</dbReference>
<dbReference type="InterPro" id="IPR034964">
    <property type="entry name" value="LS"/>
</dbReference>
<dbReference type="InterPro" id="IPR002180">
    <property type="entry name" value="LS/RS"/>
</dbReference>
<dbReference type="InterPro" id="IPR036467">
    <property type="entry name" value="LS/RS_sf"/>
</dbReference>
<dbReference type="NCBIfam" id="TIGR00114">
    <property type="entry name" value="lumazine-synth"/>
    <property type="match status" value="1"/>
</dbReference>
<dbReference type="NCBIfam" id="NF000814">
    <property type="entry name" value="PRK00061.2-2"/>
    <property type="match status" value="1"/>
</dbReference>
<dbReference type="PANTHER" id="PTHR21058:SF0">
    <property type="entry name" value="6,7-DIMETHYL-8-RIBITYLLUMAZINE SYNTHASE"/>
    <property type="match status" value="1"/>
</dbReference>
<dbReference type="PANTHER" id="PTHR21058">
    <property type="entry name" value="6,7-DIMETHYL-8-RIBITYLLUMAZINE SYNTHASE DMRL SYNTHASE LUMAZINE SYNTHASE"/>
    <property type="match status" value="1"/>
</dbReference>
<dbReference type="Pfam" id="PF00885">
    <property type="entry name" value="DMRL_synthase"/>
    <property type="match status" value="1"/>
</dbReference>
<dbReference type="SUPFAM" id="SSF52121">
    <property type="entry name" value="Lumazine synthase"/>
    <property type="match status" value="1"/>
</dbReference>
<reference key="1">
    <citation type="submission" date="2006-12" db="EMBL/GenBank/DDBJ databases">
        <authorList>
            <person name="Hendrix L."/>
            <person name="Mohamoud Y."/>
            <person name="Radune D."/>
            <person name="Shvartsbeyn A."/>
            <person name="Daugherty S."/>
            <person name="Dodson R."/>
            <person name="Durkin A.S."/>
            <person name="Harkins D."/>
            <person name="Huot H."/>
            <person name="Kothari S.P."/>
            <person name="Madupu R."/>
            <person name="Li J."/>
            <person name="Nelson W.C."/>
            <person name="Shrivastava S."/>
            <person name="Giglio M.G."/>
            <person name="Haft D."/>
            <person name="Selengut J."/>
            <person name="Fraser-Ligget C."/>
            <person name="Seshadri R."/>
        </authorList>
    </citation>
    <scope>NUCLEOTIDE SEQUENCE [LARGE SCALE GENOMIC DNA]</scope>
    <source>
        <strain>ATCC 35685 / KC583 / Herrer 020/F12,63</strain>
    </source>
</reference>
<proteinExistence type="inferred from homology"/>
<organism>
    <name type="scientific">Bartonella bacilliformis (strain ATCC 35685 / KC583 / Herrer 020/F12,63)</name>
    <dbReference type="NCBI Taxonomy" id="360095"/>
    <lineage>
        <taxon>Bacteria</taxon>
        <taxon>Pseudomonadati</taxon>
        <taxon>Pseudomonadota</taxon>
        <taxon>Alphaproteobacteria</taxon>
        <taxon>Hyphomicrobiales</taxon>
        <taxon>Bartonellaceae</taxon>
        <taxon>Bartonella</taxon>
    </lineage>
</organism>
<evidence type="ECO:0000255" key="1">
    <source>
        <dbReference type="HAMAP-Rule" id="MF_00178"/>
    </source>
</evidence>
<name>RISB_BARBK</name>
<sequence length="152" mass="16697">MTQKLHINPHLLIVEARFYNEISDELLAGAVSVLQKSGVSYDIITVPGALEIPAAIAFAEKDKTVFYDGYVALGCVIRGETYHFEIVADNSCRALMDLTVHQQLAIGNGILTVENEKQAWARAKQGEKNKGDFAAEAALCMIALKKRFGDNR</sequence>
<protein>
    <recommendedName>
        <fullName evidence="1">6,7-dimethyl-8-ribityllumazine synthase</fullName>
        <shortName evidence="1">DMRL synthase</shortName>
        <shortName evidence="1">LS</shortName>
        <shortName evidence="1">Lumazine synthase</shortName>
        <ecNumber evidence="1">2.5.1.78</ecNumber>
    </recommendedName>
</protein>
<keyword id="KW-0686">Riboflavin biosynthesis</keyword>
<keyword id="KW-0808">Transferase</keyword>